<sequence length="209" mass="23151">MEVKVLDFNGKDTGRKVQLSDSVFAIEPNNHAVYLDVKQYLANQRQGTHKAKERAEVTGSTRKIKKQKGTGTARAGSVKNPLFKGGGTVFGPRPRSYSFKLNKNLKRLARKSAFSIKAKESNIIVLEDFNFEAPNTKNFINVLKALGLENKKSLFVLGESNKNVYLSSRNLKASNVVTSSELSTYAILNTNNLVLLEGSLELIEENLSK</sequence>
<comment type="function">
    <text evidence="1">One of the primary rRNA binding proteins, this protein initially binds near the 5'-end of the 23S rRNA. It is important during the early stages of 50S assembly. It makes multiple contacts with different domains of the 23S rRNA in the assembled 50S subunit and ribosome.</text>
</comment>
<comment type="function">
    <text evidence="1">Forms part of the polypeptide exit tunnel.</text>
</comment>
<comment type="subunit">
    <text evidence="1">Part of the 50S ribosomal subunit.</text>
</comment>
<comment type="similarity">
    <text evidence="1">Belongs to the universal ribosomal protein uL4 family.</text>
</comment>
<feature type="chain" id="PRO_1000086520" description="Large ribosomal subunit protein uL4">
    <location>
        <begin position="1"/>
        <end position="209"/>
    </location>
</feature>
<feature type="region of interest" description="Disordered" evidence="2">
    <location>
        <begin position="45"/>
        <end position="77"/>
    </location>
</feature>
<dbReference type="EMBL" id="CP000685">
    <property type="protein sequence ID" value="ABQ03432.1"/>
    <property type="molecule type" value="Genomic_DNA"/>
</dbReference>
<dbReference type="RefSeq" id="WP_012022490.1">
    <property type="nucleotide sequence ID" value="NZ_MUGZ01000005.1"/>
</dbReference>
<dbReference type="SMR" id="A5FMY0"/>
<dbReference type="STRING" id="376686.Fjoh_0396"/>
<dbReference type="KEGG" id="fjo:Fjoh_0396"/>
<dbReference type="eggNOG" id="COG0088">
    <property type="taxonomic scope" value="Bacteria"/>
</dbReference>
<dbReference type="HOGENOM" id="CLU_041575_5_2_10"/>
<dbReference type="OrthoDB" id="9803201at2"/>
<dbReference type="Proteomes" id="UP000006694">
    <property type="component" value="Chromosome"/>
</dbReference>
<dbReference type="GO" id="GO:1990904">
    <property type="term" value="C:ribonucleoprotein complex"/>
    <property type="evidence" value="ECO:0007669"/>
    <property type="project" value="UniProtKB-KW"/>
</dbReference>
<dbReference type="GO" id="GO:0005840">
    <property type="term" value="C:ribosome"/>
    <property type="evidence" value="ECO:0007669"/>
    <property type="project" value="UniProtKB-KW"/>
</dbReference>
<dbReference type="GO" id="GO:0019843">
    <property type="term" value="F:rRNA binding"/>
    <property type="evidence" value="ECO:0007669"/>
    <property type="project" value="UniProtKB-UniRule"/>
</dbReference>
<dbReference type="GO" id="GO:0003735">
    <property type="term" value="F:structural constituent of ribosome"/>
    <property type="evidence" value="ECO:0007669"/>
    <property type="project" value="InterPro"/>
</dbReference>
<dbReference type="GO" id="GO:0006412">
    <property type="term" value="P:translation"/>
    <property type="evidence" value="ECO:0007669"/>
    <property type="project" value="UniProtKB-UniRule"/>
</dbReference>
<dbReference type="Gene3D" id="3.40.1370.10">
    <property type="match status" value="1"/>
</dbReference>
<dbReference type="HAMAP" id="MF_01328_B">
    <property type="entry name" value="Ribosomal_uL4_B"/>
    <property type="match status" value="1"/>
</dbReference>
<dbReference type="InterPro" id="IPR002136">
    <property type="entry name" value="Ribosomal_uL4"/>
</dbReference>
<dbReference type="InterPro" id="IPR013005">
    <property type="entry name" value="Ribosomal_uL4-like"/>
</dbReference>
<dbReference type="InterPro" id="IPR023574">
    <property type="entry name" value="Ribosomal_uL4_dom_sf"/>
</dbReference>
<dbReference type="NCBIfam" id="TIGR03953">
    <property type="entry name" value="rplD_bact"/>
    <property type="match status" value="1"/>
</dbReference>
<dbReference type="PANTHER" id="PTHR10746">
    <property type="entry name" value="50S RIBOSOMAL PROTEIN L4"/>
    <property type="match status" value="1"/>
</dbReference>
<dbReference type="PANTHER" id="PTHR10746:SF6">
    <property type="entry name" value="LARGE RIBOSOMAL SUBUNIT PROTEIN UL4M"/>
    <property type="match status" value="1"/>
</dbReference>
<dbReference type="Pfam" id="PF00573">
    <property type="entry name" value="Ribosomal_L4"/>
    <property type="match status" value="1"/>
</dbReference>
<dbReference type="SUPFAM" id="SSF52166">
    <property type="entry name" value="Ribosomal protein L4"/>
    <property type="match status" value="1"/>
</dbReference>
<evidence type="ECO:0000255" key="1">
    <source>
        <dbReference type="HAMAP-Rule" id="MF_01328"/>
    </source>
</evidence>
<evidence type="ECO:0000256" key="2">
    <source>
        <dbReference type="SAM" id="MobiDB-lite"/>
    </source>
</evidence>
<evidence type="ECO:0000305" key="3"/>
<proteinExistence type="inferred from homology"/>
<reference key="1">
    <citation type="journal article" date="2009" name="Appl. Environ. Microbiol.">
        <title>Novel features of the polysaccharide-digesting gliding bacterium Flavobacterium johnsoniae as revealed by genome sequence analysis.</title>
        <authorList>
            <person name="McBride M.J."/>
            <person name="Xie G."/>
            <person name="Martens E.C."/>
            <person name="Lapidus A."/>
            <person name="Henrissat B."/>
            <person name="Rhodes R.G."/>
            <person name="Goltsman E."/>
            <person name="Wang W."/>
            <person name="Xu J."/>
            <person name="Hunnicutt D.W."/>
            <person name="Staroscik A.M."/>
            <person name="Hoover T.R."/>
            <person name="Cheng Y.Q."/>
            <person name="Stein J.L."/>
        </authorList>
    </citation>
    <scope>NUCLEOTIDE SEQUENCE [LARGE SCALE GENOMIC DNA]</scope>
    <source>
        <strain>ATCC 17061 / DSM 2064 / JCM 8514 / BCRC 14874 / CCUG 350202 / NBRC 14942 / NCIMB 11054 / UW101</strain>
    </source>
</reference>
<accession>A5FMY0</accession>
<name>RL4_FLAJ1</name>
<gene>
    <name evidence="1" type="primary">rplD</name>
    <name type="ordered locus">Fjoh_0396</name>
</gene>
<keyword id="KW-0687">Ribonucleoprotein</keyword>
<keyword id="KW-0689">Ribosomal protein</keyword>
<keyword id="KW-0694">RNA-binding</keyword>
<keyword id="KW-0699">rRNA-binding</keyword>
<protein>
    <recommendedName>
        <fullName evidence="1">Large ribosomal subunit protein uL4</fullName>
    </recommendedName>
    <alternativeName>
        <fullName evidence="3">50S ribosomal protein L4</fullName>
    </alternativeName>
</protein>
<organism>
    <name type="scientific">Flavobacterium johnsoniae (strain ATCC 17061 / DSM 2064 / JCM 8514 / BCRC 14874 / CCUG 350202 / NBRC 14942 / NCIMB 11054 / UW101)</name>
    <name type="common">Cytophaga johnsonae</name>
    <dbReference type="NCBI Taxonomy" id="376686"/>
    <lineage>
        <taxon>Bacteria</taxon>
        <taxon>Pseudomonadati</taxon>
        <taxon>Bacteroidota</taxon>
        <taxon>Flavobacteriia</taxon>
        <taxon>Flavobacteriales</taxon>
        <taxon>Flavobacteriaceae</taxon>
        <taxon>Flavobacterium</taxon>
    </lineage>
</organism>